<comment type="function">
    <text evidence="1">Catalyzes the reversible interconversion of 5-formyl-H(4)MPT to methenyl-H(4)MPT(+).</text>
</comment>
<comment type="catalytic activity">
    <reaction evidence="1">
        <text>5,10-methenyl-5,6,7,8-tetrahydromethanopterin + H2O = N(5)-formyl-5,6,7,8-tetrahydromethanopterin + H(+)</text>
        <dbReference type="Rhea" id="RHEA:19053"/>
        <dbReference type="ChEBI" id="CHEBI:15377"/>
        <dbReference type="ChEBI" id="CHEBI:15378"/>
        <dbReference type="ChEBI" id="CHEBI:58018"/>
        <dbReference type="ChEBI" id="CHEBI:58337"/>
        <dbReference type="EC" id="3.5.4.27"/>
    </reaction>
</comment>
<comment type="pathway">
    <text evidence="1">One-carbon metabolism; methanogenesis from CO(2); 5,10-methenyl-5,6,7,8-tetrahydromethanopterin from CO(2): step 3/3.</text>
</comment>
<comment type="subcellular location">
    <subcellularLocation>
        <location evidence="1">Cytoplasm</location>
    </subcellularLocation>
</comment>
<comment type="similarity">
    <text evidence="1">Belongs to the MCH family.</text>
</comment>
<accession>A2SQG9</accession>
<keyword id="KW-0963">Cytoplasm</keyword>
<keyword id="KW-0378">Hydrolase</keyword>
<keyword id="KW-0484">Methanogenesis</keyword>
<keyword id="KW-0554">One-carbon metabolism</keyword>
<keyword id="KW-1185">Reference proteome</keyword>
<dbReference type="EC" id="3.5.4.27" evidence="1"/>
<dbReference type="EMBL" id="CP000559">
    <property type="protein sequence ID" value="ABN06575.1"/>
    <property type="molecule type" value="Genomic_DNA"/>
</dbReference>
<dbReference type="RefSeq" id="WP_011832776.1">
    <property type="nucleotide sequence ID" value="NC_008942.1"/>
</dbReference>
<dbReference type="SMR" id="A2SQG9"/>
<dbReference type="STRING" id="410358.Mlab_0399"/>
<dbReference type="GeneID" id="4794649"/>
<dbReference type="KEGG" id="mla:Mlab_0399"/>
<dbReference type="eggNOG" id="arCOG02675">
    <property type="taxonomic scope" value="Archaea"/>
</dbReference>
<dbReference type="HOGENOM" id="CLU_876031_0_0_2"/>
<dbReference type="OrthoDB" id="105468at2157"/>
<dbReference type="UniPathway" id="UPA00640">
    <property type="reaction ID" value="UER00694"/>
</dbReference>
<dbReference type="Proteomes" id="UP000000365">
    <property type="component" value="Chromosome"/>
</dbReference>
<dbReference type="GO" id="GO:0005737">
    <property type="term" value="C:cytoplasm"/>
    <property type="evidence" value="ECO:0007669"/>
    <property type="project" value="UniProtKB-SubCell"/>
</dbReference>
<dbReference type="GO" id="GO:0018759">
    <property type="term" value="F:methenyltetrahydromethanopterin cyclohydrolase activity"/>
    <property type="evidence" value="ECO:0007669"/>
    <property type="project" value="UniProtKB-UniRule"/>
</dbReference>
<dbReference type="GO" id="GO:0019386">
    <property type="term" value="P:methanogenesis, from carbon dioxide"/>
    <property type="evidence" value="ECO:0007669"/>
    <property type="project" value="UniProtKB-UniRule"/>
</dbReference>
<dbReference type="GO" id="GO:0006730">
    <property type="term" value="P:one-carbon metabolic process"/>
    <property type="evidence" value="ECO:0007669"/>
    <property type="project" value="UniProtKB-UniRule"/>
</dbReference>
<dbReference type="CDD" id="cd00545">
    <property type="entry name" value="MCH"/>
    <property type="match status" value="1"/>
</dbReference>
<dbReference type="Gene3D" id="3.10.340.11">
    <property type="entry name" value="Methenyltetrahydromethanopterin Cyclohydrolase, Chain A, domain 1"/>
    <property type="match status" value="1"/>
</dbReference>
<dbReference type="Gene3D" id="3.30.1030.10">
    <property type="entry name" value="Methenyltetrahydromethanopterin Cyclohydrolase, Chain A, domain 2"/>
    <property type="match status" value="1"/>
</dbReference>
<dbReference type="HAMAP" id="MF_00486">
    <property type="entry name" value="McH"/>
    <property type="match status" value="1"/>
</dbReference>
<dbReference type="InterPro" id="IPR003209">
    <property type="entry name" value="METHMP_CycHdrlase"/>
</dbReference>
<dbReference type="NCBIfam" id="TIGR03120">
    <property type="entry name" value="one_C_mch"/>
    <property type="match status" value="1"/>
</dbReference>
<dbReference type="Pfam" id="PF02289">
    <property type="entry name" value="MCH"/>
    <property type="match status" value="1"/>
</dbReference>
<dbReference type="SUPFAM" id="SSF56199">
    <property type="entry name" value="Methenyltetrahydromethanopterin cyclohydrolase"/>
    <property type="match status" value="1"/>
</dbReference>
<sequence length="314" mass="33489">MVSVNELGLDLFEELVENADLFNVAYHELDNGSRVVDCGVSVPGGYGAGDYFTRICMGGLGDIAFRQGMVGQFPMTFIDVNTDFPAISCLGSQKAGWTVKHDNFFAMGSGPARALSLQPKHTFEVIGYEDESDAAVICLEADRLPSGAVMEMIAEKCKVDVANVCALVAPTSSLVGSIQVAGRCVETAVYKLNELGFDTTKIIAAAGTAPIPPVRGAKLAMGVTNDATIYHGQINLTMNAPEIVDYLEKIPSCSSNGYGKPFNDIFKEAGYDFYKIDKSLFSPAEVIINEVSTGKVYQVGKVDTAVTLKSFGLA</sequence>
<feature type="chain" id="PRO_1000014399" description="Methenyltetrahydromethanopterin cyclohydrolase">
    <location>
        <begin position="1"/>
        <end position="314"/>
    </location>
</feature>
<evidence type="ECO:0000255" key="1">
    <source>
        <dbReference type="HAMAP-Rule" id="MF_00486"/>
    </source>
</evidence>
<proteinExistence type="inferred from homology"/>
<protein>
    <recommendedName>
        <fullName evidence="1">Methenyltetrahydromethanopterin cyclohydrolase</fullName>
        <ecNumber evidence="1">3.5.4.27</ecNumber>
    </recommendedName>
    <alternativeName>
        <fullName evidence="1">Methenyl-H4MPT cyclohydrolase</fullName>
    </alternativeName>
</protein>
<gene>
    <name evidence="1" type="primary">mch</name>
    <name type="ordered locus">Mlab_0399</name>
</gene>
<reference key="1">
    <citation type="journal article" date="2009" name="Stand. Genomic Sci.">
        <title>Complete genome sequence of Methanocorpusculum labreanum type strain Z.</title>
        <authorList>
            <person name="Anderson I.J."/>
            <person name="Sieprawska-Lupa M."/>
            <person name="Goltsman E."/>
            <person name="Lapidus A."/>
            <person name="Copeland A."/>
            <person name="Glavina Del Rio T."/>
            <person name="Tice H."/>
            <person name="Dalin E."/>
            <person name="Barry K."/>
            <person name="Pitluck S."/>
            <person name="Hauser L."/>
            <person name="Land M."/>
            <person name="Lucas S."/>
            <person name="Richardson P."/>
            <person name="Whitman W.B."/>
            <person name="Kyrpides N.C."/>
        </authorList>
    </citation>
    <scope>NUCLEOTIDE SEQUENCE [LARGE SCALE GENOMIC DNA]</scope>
    <source>
        <strain>ATCC 43576 / DSM 4855 / Z</strain>
    </source>
</reference>
<organism>
    <name type="scientific">Methanocorpusculum labreanum (strain ATCC 43576 / DSM 4855 / Z)</name>
    <dbReference type="NCBI Taxonomy" id="410358"/>
    <lineage>
        <taxon>Archaea</taxon>
        <taxon>Methanobacteriati</taxon>
        <taxon>Methanobacteriota</taxon>
        <taxon>Stenosarchaea group</taxon>
        <taxon>Methanomicrobia</taxon>
        <taxon>Methanomicrobiales</taxon>
        <taxon>Methanocorpusculaceae</taxon>
        <taxon>Methanocorpusculum</taxon>
    </lineage>
</organism>
<name>MCH_METLZ</name>